<feature type="signal peptide" evidence="2">
    <location>
        <begin position="1"/>
        <end position="24"/>
    </location>
</feature>
<feature type="chain" id="PRO_0000013061" description="Glutathione peroxidase 3">
    <location>
        <begin position="25"/>
        <end position="226"/>
    </location>
</feature>
<feature type="active site">
    <location>
        <position position="73"/>
    </location>
</feature>
<feature type="non-standard amino acid" description="Selenocysteine">
    <location>
        <position position="73"/>
    </location>
</feature>
<feature type="sequence conflict" description="In Ref. 2; AAI49267." evidence="3" ref="2">
    <original>L</original>
    <variation>H</variation>
    <location>
        <position position="169"/>
    </location>
</feature>
<proteinExistence type="evidence at transcript level"/>
<dbReference type="EC" id="1.11.1.9" evidence="1"/>
<dbReference type="EMBL" id="L10325">
    <property type="protein sequence ID" value="AAA16579.2"/>
    <property type="molecule type" value="mRNA"/>
</dbReference>
<dbReference type="EMBL" id="BC149266">
    <property type="protein sequence ID" value="AAI49267.1"/>
    <property type="molecule type" value="mRNA"/>
</dbReference>
<dbReference type="PIR" id="JX0280">
    <property type="entry name" value="JX0280"/>
</dbReference>
<dbReference type="RefSeq" id="NP_776502.1">
    <property type="nucleotide sequence ID" value="NM_174077.5"/>
</dbReference>
<dbReference type="FunCoup" id="P37141">
    <property type="interactions" value="316"/>
</dbReference>
<dbReference type="STRING" id="9913.ENSBTAP00000053146"/>
<dbReference type="PeroxiBase" id="3636">
    <property type="entry name" value="BtGPx03"/>
</dbReference>
<dbReference type="PaxDb" id="9913-ENSBTAP00000053146"/>
<dbReference type="GeneID" id="281210"/>
<dbReference type="KEGG" id="bta:281210"/>
<dbReference type="CTD" id="2878"/>
<dbReference type="VEuPathDB" id="HostDB:ENSBTAG00000043553"/>
<dbReference type="eggNOG" id="KOG1651">
    <property type="taxonomic scope" value="Eukaryota"/>
</dbReference>
<dbReference type="InParanoid" id="P37141"/>
<dbReference type="OMA" id="GRPIMRW"/>
<dbReference type="OrthoDB" id="446890at2759"/>
<dbReference type="Reactome" id="R-BTA-3299685">
    <property type="pathway name" value="Detoxification of Reactive Oxygen Species"/>
</dbReference>
<dbReference type="Proteomes" id="UP000009136">
    <property type="component" value="Chromosome 7"/>
</dbReference>
<dbReference type="Bgee" id="ENSBTAG00000043553">
    <property type="expression patterns" value="Expressed in metanephros cortex and 103 other cell types or tissues"/>
</dbReference>
<dbReference type="GO" id="GO:0005615">
    <property type="term" value="C:extracellular space"/>
    <property type="evidence" value="ECO:0000250"/>
    <property type="project" value="UniProtKB"/>
</dbReference>
<dbReference type="GO" id="GO:0004602">
    <property type="term" value="F:glutathione peroxidase activity"/>
    <property type="evidence" value="ECO:0000250"/>
    <property type="project" value="UniProtKB"/>
</dbReference>
<dbReference type="GO" id="GO:0042802">
    <property type="term" value="F:identical protein binding"/>
    <property type="evidence" value="ECO:0000250"/>
    <property type="project" value="UniProtKB"/>
</dbReference>
<dbReference type="GO" id="GO:0008430">
    <property type="term" value="F:selenium binding"/>
    <property type="evidence" value="ECO:0000250"/>
    <property type="project" value="UniProtKB"/>
</dbReference>
<dbReference type="GO" id="GO:0042744">
    <property type="term" value="P:hydrogen peroxide catabolic process"/>
    <property type="evidence" value="ECO:0000318"/>
    <property type="project" value="GO_Central"/>
</dbReference>
<dbReference type="GO" id="GO:0006979">
    <property type="term" value="P:response to oxidative stress"/>
    <property type="evidence" value="ECO:0007669"/>
    <property type="project" value="InterPro"/>
</dbReference>
<dbReference type="CDD" id="cd00340">
    <property type="entry name" value="GSH_Peroxidase"/>
    <property type="match status" value="1"/>
</dbReference>
<dbReference type="FunFam" id="3.40.30.10:FF:000112">
    <property type="entry name" value="Glutathione peroxidase"/>
    <property type="match status" value="1"/>
</dbReference>
<dbReference type="Gene3D" id="3.40.30.10">
    <property type="entry name" value="Glutaredoxin"/>
    <property type="match status" value="1"/>
</dbReference>
<dbReference type="InterPro" id="IPR000889">
    <property type="entry name" value="Glutathione_peroxidase"/>
</dbReference>
<dbReference type="InterPro" id="IPR029759">
    <property type="entry name" value="GPX_AS"/>
</dbReference>
<dbReference type="InterPro" id="IPR029760">
    <property type="entry name" value="GPX_CS"/>
</dbReference>
<dbReference type="InterPro" id="IPR036249">
    <property type="entry name" value="Thioredoxin-like_sf"/>
</dbReference>
<dbReference type="PANTHER" id="PTHR11592">
    <property type="entry name" value="GLUTATHIONE PEROXIDASE"/>
    <property type="match status" value="1"/>
</dbReference>
<dbReference type="PANTHER" id="PTHR11592:SF32">
    <property type="entry name" value="GLUTATHIONE PEROXIDASE 3"/>
    <property type="match status" value="1"/>
</dbReference>
<dbReference type="Pfam" id="PF00255">
    <property type="entry name" value="GSHPx"/>
    <property type="match status" value="1"/>
</dbReference>
<dbReference type="PIRSF" id="PIRSF000303">
    <property type="entry name" value="Glutathion_perox"/>
    <property type="match status" value="1"/>
</dbReference>
<dbReference type="PRINTS" id="PR01011">
    <property type="entry name" value="GLUTPROXDASE"/>
</dbReference>
<dbReference type="SUPFAM" id="SSF52833">
    <property type="entry name" value="Thioredoxin-like"/>
    <property type="match status" value="1"/>
</dbReference>
<dbReference type="PROSITE" id="PS00460">
    <property type="entry name" value="GLUTATHIONE_PEROXID_1"/>
    <property type="match status" value="1"/>
</dbReference>
<dbReference type="PROSITE" id="PS00763">
    <property type="entry name" value="GLUTATHIONE_PEROXID_2"/>
    <property type="match status" value="1"/>
</dbReference>
<dbReference type="PROSITE" id="PS51355">
    <property type="entry name" value="GLUTATHIONE_PEROXID_3"/>
    <property type="match status" value="1"/>
</dbReference>
<protein>
    <recommendedName>
        <fullName evidence="1">Glutathione peroxidase 3</fullName>
        <shortName>GPx-3</shortName>
        <shortName>GSHPx-3</shortName>
        <ecNumber evidence="1">1.11.1.9</ecNumber>
    </recommendedName>
    <alternativeName>
        <fullName>Plasma glutathione peroxidase</fullName>
        <shortName>GPx-P</shortName>
        <shortName>GSHPx-P</shortName>
    </alternativeName>
</protein>
<organism>
    <name type="scientific">Bos taurus</name>
    <name type="common">Bovine</name>
    <dbReference type="NCBI Taxonomy" id="9913"/>
    <lineage>
        <taxon>Eukaryota</taxon>
        <taxon>Metazoa</taxon>
        <taxon>Chordata</taxon>
        <taxon>Craniata</taxon>
        <taxon>Vertebrata</taxon>
        <taxon>Euteleostomi</taxon>
        <taxon>Mammalia</taxon>
        <taxon>Eutheria</taxon>
        <taxon>Laurasiatheria</taxon>
        <taxon>Artiodactyla</taxon>
        <taxon>Ruminantia</taxon>
        <taxon>Pecora</taxon>
        <taxon>Bovidae</taxon>
        <taxon>Bovinae</taxon>
        <taxon>Bos</taxon>
    </lineage>
</organism>
<name>GPX3_BOVIN</name>
<accession>P37141</accession>
<accession>A6QPD6</accession>
<comment type="function">
    <text evidence="1">Protects cells and enzymes from oxidative damage, by catalyzing the reduction of hydrogen peroxide, lipid peroxides and organic hydroperoxide, by glutathione.</text>
</comment>
<comment type="catalytic activity">
    <reaction evidence="1">
        <text>2 glutathione + H2O2 = glutathione disulfide + 2 H2O</text>
        <dbReference type="Rhea" id="RHEA:16833"/>
        <dbReference type="ChEBI" id="CHEBI:15377"/>
        <dbReference type="ChEBI" id="CHEBI:16240"/>
        <dbReference type="ChEBI" id="CHEBI:57925"/>
        <dbReference type="ChEBI" id="CHEBI:58297"/>
        <dbReference type="EC" id="1.11.1.9"/>
    </reaction>
</comment>
<comment type="catalytic activity">
    <reaction evidence="1">
        <text>tert-butyl hydroperoxide + 2 glutathione = tert-butanol + glutathione disulfide + H2O</text>
        <dbReference type="Rhea" id="RHEA:69412"/>
        <dbReference type="ChEBI" id="CHEBI:15377"/>
        <dbReference type="ChEBI" id="CHEBI:45895"/>
        <dbReference type="ChEBI" id="CHEBI:57925"/>
        <dbReference type="ChEBI" id="CHEBI:58297"/>
        <dbReference type="ChEBI" id="CHEBI:64090"/>
    </reaction>
</comment>
<comment type="subunit">
    <text>Homotetramer.</text>
</comment>
<comment type="subcellular location">
    <subcellularLocation>
        <location>Secreted</location>
    </subcellularLocation>
</comment>
<comment type="tissue specificity">
    <text>Secreted in plasma.</text>
</comment>
<comment type="similarity">
    <text evidence="3">Belongs to the glutathione peroxidase family.</text>
</comment>
<gene>
    <name evidence="1" type="primary">GPX3</name>
</gene>
<evidence type="ECO:0000250" key="1">
    <source>
        <dbReference type="UniProtKB" id="P22352"/>
    </source>
</evidence>
<evidence type="ECO:0000255" key="2"/>
<evidence type="ECO:0000305" key="3"/>
<sequence length="226" mass="25663">MARLFRASCLLSLLLAGFIPPSQGQEKSKTDCHAGVGGTIYEYGALTIDGEEYIPFKQYAGKYILFVNVASYUGLTGQYVELNALQEELEPFGLVILGFPCNQFGKQEPGENSEILATLKYVRPGGGFTPNFQLFEKGDVNGEKEQKFYTFLKNSCPPTSELLGSPDRLFWEPMKVHDIRWNFEKFLVGPDGIPIMRWYHRTTVNSVKMDILTYMRRRAVWEAKGK</sequence>
<reference key="1">
    <citation type="journal article" date="1993" name="J. Biochem.">
        <title>Cloning of the bovine plasma selenium-dependent glutathione peroxidase (GP) cDNA from the ocular ciliary epithelium: expression of the plasma and cellular forms within the mammalian eye.</title>
        <authorList>
            <person name="Martin-Alonso J.M."/>
            <person name="Ghosh S."/>
            <person name="Coca-Prados M."/>
        </authorList>
    </citation>
    <scope>NUCLEOTIDE SEQUENCE [MRNA]</scope>
    <source>
        <tissue>Eye</tissue>
    </source>
</reference>
<reference key="2">
    <citation type="submission" date="2007-07" db="EMBL/GenBank/DDBJ databases">
        <authorList>
            <consortium name="NIH - Mammalian Gene Collection (MGC) project"/>
        </authorList>
    </citation>
    <scope>NUCLEOTIDE SEQUENCE [LARGE SCALE MRNA]</scope>
    <source>
        <strain>Hereford</strain>
        <tissue>Testis</tissue>
    </source>
</reference>
<keyword id="KW-0560">Oxidoreductase</keyword>
<keyword id="KW-0575">Peroxidase</keyword>
<keyword id="KW-1185">Reference proteome</keyword>
<keyword id="KW-0964">Secreted</keyword>
<keyword id="KW-0712">Selenocysteine</keyword>
<keyword id="KW-0732">Signal</keyword>